<dbReference type="EC" id="2.7.4.6" evidence="1"/>
<dbReference type="EMBL" id="CP000919">
    <property type="protein sequence ID" value="ACO19863.1"/>
    <property type="molecule type" value="Genomic_DNA"/>
</dbReference>
<dbReference type="RefSeq" id="WP_000438289.1">
    <property type="nucleotide sequence ID" value="NC_012466.1"/>
</dbReference>
<dbReference type="SMR" id="C1CGP2"/>
<dbReference type="KEGG" id="sjj:SPJ_1952"/>
<dbReference type="HOGENOM" id="CLU_060216_6_3_9"/>
<dbReference type="Proteomes" id="UP000002206">
    <property type="component" value="Chromosome"/>
</dbReference>
<dbReference type="GO" id="GO:0005737">
    <property type="term" value="C:cytoplasm"/>
    <property type="evidence" value="ECO:0007669"/>
    <property type="project" value="UniProtKB-SubCell"/>
</dbReference>
<dbReference type="GO" id="GO:0005524">
    <property type="term" value="F:ATP binding"/>
    <property type="evidence" value="ECO:0007669"/>
    <property type="project" value="UniProtKB-UniRule"/>
</dbReference>
<dbReference type="GO" id="GO:0046872">
    <property type="term" value="F:metal ion binding"/>
    <property type="evidence" value="ECO:0007669"/>
    <property type="project" value="UniProtKB-KW"/>
</dbReference>
<dbReference type="GO" id="GO:0004550">
    <property type="term" value="F:nucleoside diphosphate kinase activity"/>
    <property type="evidence" value="ECO:0007669"/>
    <property type="project" value="UniProtKB-UniRule"/>
</dbReference>
<dbReference type="GO" id="GO:0006241">
    <property type="term" value="P:CTP biosynthetic process"/>
    <property type="evidence" value="ECO:0007669"/>
    <property type="project" value="UniProtKB-UniRule"/>
</dbReference>
<dbReference type="GO" id="GO:0006183">
    <property type="term" value="P:GTP biosynthetic process"/>
    <property type="evidence" value="ECO:0007669"/>
    <property type="project" value="UniProtKB-UniRule"/>
</dbReference>
<dbReference type="GO" id="GO:0006228">
    <property type="term" value="P:UTP biosynthetic process"/>
    <property type="evidence" value="ECO:0007669"/>
    <property type="project" value="UniProtKB-UniRule"/>
</dbReference>
<dbReference type="CDD" id="cd04413">
    <property type="entry name" value="NDPk_I"/>
    <property type="match status" value="1"/>
</dbReference>
<dbReference type="FunFam" id="3.30.70.141:FF:000013">
    <property type="entry name" value="Nucleoside diphosphate kinase"/>
    <property type="match status" value="1"/>
</dbReference>
<dbReference type="Gene3D" id="3.30.70.141">
    <property type="entry name" value="Nucleoside diphosphate kinase-like domain"/>
    <property type="match status" value="1"/>
</dbReference>
<dbReference type="HAMAP" id="MF_00451">
    <property type="entry name" value="NDP_kinase"/>
    <property type="match status" value="1"/>
</dbReference>
<dbReference type="InterPro" id="IPR034907">
    <property type="entry name" value="NDK-like_dom"/>
</dbReference>
<dbReference type="InterPro" id="IPR036850">
    <property type="entry name" value="NDK-like_dom_sf"/>
</dbReference>
<dbReference type="InterPro" id="IPR001564">
    <property type="entry name" value="Nucleoside_diP_kinase"/>
</dbReference>
<dbReference type="InterPro" id="IPR023005">
    <property type="entry name" value="Nucleoside_diP_kinase_AS"/>
</dbReference>
<dbReference type="NCBIfam" id="NF001908">
    <property type="entry name" value="PRK00668.1"/>
    <property type="match status" value="1"/>
</dbReference>
<dbReference type="PANTHER" id="PTHR11349">
    <property type="entry name" value="NUCLEOSIDE DIPHOSPHATE KINASE"/>
    <property type="match status" value="1"/>
</dbReference>
<dbReference type="Pfam" id="PF00334">
    <property type="entry name" value="NDK"/>
    <property type="match status" value="1"/>
</dbReference>
<dbReference type="PRINTS" id="PR01243">
    <property type="entry name" value="NUCDPKINASE"/>
</dbReference>
<dbReference type="SMART" id="SM00562">
    <property type="entry name" value="NDK"/>
    <property type="match status" value="1"/>
</dbReference>
<dbReference type="SUPFAM" id="SSF54919">
    <property type="entry name" value="Nucleoside diphosphate kinase, NDK"/>
    <property type="match status" value="1"/>
</dbReference>
<dbReference type="PROSITE" id="PS00469">
    <property type="entry name" value="NDPK"/>
    <property type="match status" value="1"/>
</dbReference>
<dbReference type="PROSITE" id="PS51374">
    <property type="entry name" value="NDPK_LIKE"/>
    <property type="match status" value="1"/>
</dbReference>
<keyword id="KW-0067">ATP-binding</keyword>
<keyword id="KW-0963">Cytoplasm</keyword>
<keyword id="KW-0418">Kinase</keyword>
<keyword id="KW-0460">Magnesium</keyword>
<keyword id="KW-0479">Metal-binding</keyword>
<keyword id="KW-0546">Nucleotide metabolism</keyword>
<keyword id="KW-0547">Nucleotide-binding</keyword>
<keyword id="KW-0597">Phosphoprotein</keyword>
<keyword id="KW-0808">Transferase</keyword>
<comment type="function">
    <text evidence="1">Major role in the synthesis of nucleoside triphosphates other than ATP. The ATP gamma phosphate is transferred to the NDP beta phosphate via a ping-pong mechanism, using a phosphorylated active-site intermediate.</text>
</comment>
<comment type="catalytic activity">
    <reaction evidence="1">
        <text>a 2'-deoxyribonucleoside 5'-diphosphate + ATP = a 2'-deoxyribonucleoside 5'-triphosphate + ADP</text>
        <dbReference type="Rhea" id="RHEA:44640"/>
        <dbReference type="ChEBI" id="CHEBI:30616"/>
        <dbReference type="ChEBI" id="CHEBI:61560"/>
        <dbReference type="ChEBI" id="CHEBI:73316"/>
        <dbReference type="ChEBI" id="CHEBI:456216"/>
        <dbReference type="EC" id="2.7.4.6"/>
    </reaction>
</comment>
<comment type="catalytic activity">
    <reaction evidence="1">
        <text>a ribonucleoside 5'-diphosphate + ATP = a ribonucleoside 5'-triphosphate + ADP</text>
        <dbReference type="Rhea" id="RHEA:18113"/>
        <dbReference type="ChEBI" id="CHEBI:30616"/>
        <dbReference type="ChEBI" id="CHEBI:57930"/>
        <dbReference type="ChEBI" id="CHEBI:61557"/>
        <dbReference type="ChEBI" id="CHEBI:456216"/>
        <dbReference type="EC" id="2.7.4.6"/>
    </reaction>
</comment>
<comment type="cofactor">
    <cofactor evidence="1">
        <name>Mg(2+)</name>
        <dbReference type="ChEBI" id="CHEBI:18420"/>
    </cofactor>
</comment>
<comment type="subunit">
    <text evidence="1">Homotetramer.</text>
</comment>
<comment type="subcellular location">
    <subcellularLocation>
        <location evidence="1">Cytoplasm</location>
    </subcellularLocation>
</comment>
<comment type="similarity">
    <text evidence="1">Belongs to the NDK family.</text>
</comment>
<protein>
    <recommendedName>
        <fullName evidence="1">Nucleoside diphosphate kinase</fullName>
        <shortName evidence="1">NDK</shortName>
        <shortName evidence="1">NDP kinase</shortName>
        <ecNumber evidence="1">2.7.4.6</ecNumber>
    </recommendedName>
    <alternativeName>
        <fullName evidence="1">Nucleoside-2-P kinase</fullName>
    </alternativeName>
</protein>
<accession>C1CGP2</accession>
<sequence>MEQTFFIIKPDGVKRGLVGEVLKRIEQRGFTIEKLEFRSQVSEELIDQHYQDLVGQSFYPPIREFMTSGPVLVGVISGPKVIETWRTMMGATRPEEALPGTIRGDFAKAAGENEIIQNVVHGSDSEESAKREIALWF</sequence>
<gene>
    <name evidence="1" type="primary">ndk</name>
    <name type="ordered locus">SPJ_1952</name>
</gene>
<organism>
    <name type="scientific">Streptococcus pneumoniae (strain JJA)</name>
    <dbReference type="NCBI Taxonomy" id="488222"/>
    <lineage>
        <taxon>Bacteria</taxon>
        <taxon>Bacillati</taxon>
        <taxon>Bacillota</taxon>
        <taxon>Bacilli</taxon>
        <taxon>Lactobacillales</taxon>
        <taxon>Streptococcaceae</taxon>
        <taxon>Streptococcus</taxon>
    </lineage>
</organism>
<feature type="chain" id="PRO_1000192292" description="Nucleoside diphosphate kinase">
    <location>
        <begin position="1"/>
        <end position="137"/>
    </location>
</feature>
<feature type="active site" description="Pros-phosphohistidine intermediate" evidence="1">
    <location>
        <position position="121"/>
    </location>
</feature>
<feature type="binding site" evidence="1">
    <location>
        <position position="9"/>
    </location>
    <ligand>
        <name>ATP</name>
        <dbReference type="ChEBI" id="CHEBI:30616"/>
    </ligand>
</feature>
<feature type="binding site" evidence="1">
    <location>
        <position position="58"/>
    </location>
    <ligand>
        <name>ATP</name>
        <dbReference type="ChEBI" id="CHEBI:30616"/>
    </ligand>
</feature>
<feature type="binding site" evidence="1">
    <location>
        <position position="86"/>
    </location>
    <ligand>
        <name>ATP</name>
        <dbReference type="ChEBI" id="CHEBI:30616"/>
    </ligand>
</feature>
<feature type="binding site" evidence="1">
    <location>
        <position position="92"/>
    </location>
    <ligand>
        <name>ATP</name>
        <dbReference type="ChEBI" id="CHEBI:30616"/>
    </ligand>
</feature>
<feature type="binding site" evidence="1">
    <location>
        <position position="103"/>
    </location>
    <ligand>
        <name>ATP</name>
        <dbReference type="ChEBI" id="CHEBI:30616"/>
    </ligand>
</feature>
<feature type="binding site" evidence="1">
    <location>
        <position position="113"/>
    </location>
    <ligand>
        <name>ATP</name>
        <dbReference type="ChEBI" id="CHEBI:30616"/>
    </ligand>
</feature>
<proteinExistence type="inferred from homology"/>
<name>NDK_STRZJ</name>
<evidence type="ECO:0000255" key="1">
    <source>
        <dbReference type="HAMAP-Rule" id="MF_00451"/>
    </source>
</evidence>
<reference key="1">
    <citation type="journal article" date="2010" name="Genome Biol.">
        <title>Structure and dynamics of the pan-genome of Streptococcus pneumoniae and closely related species.</title>
        <authorList>
            <person name="Donati C."/>
            <person name="Hiller N.L."/>
            <person name="Tettelin H."/>
            <person name="Muzzi A."/>
            <person name="Croucher N.J."/>
            <person name="Angiuoli S.V."/>
            <person name="Oggioni M."/>
            <person name="Dunning Hotopp J.C."/>
            <person name="Hu F.Z."/>
            <person name="Riley D.R."/>
            <person name="Covacci A."/>
            <person name="Mitchell T.J."/>
            <person name="Bentley S.D."/>
            <person name="Kilian M."/>
            <person name="Ehrlich G.D."/>
            <person name="Rappuoli R."/>
            <person name="Moxon E.R."/>
            <person name="Masignani V."/>
        </authorList>
    </citation>
    <scope>NUCLEOTIDE SEQUENCE [LARGE SCALE GENOMIC DNA]</scope>
    <source>
        <strain>JJA</strain>
    </source>
</reference>